<evidence type="ECO:0000255" key="1">
    <source>
        <dbReference type="HAMAP-Rule" id="MF_00412"/>
    </source>
</evidence>
<reference key="1">
    <citation type="submission" date="2009-02" db="EMBL/GenBank/DDBJ databases">
        <title>Genome sequence of Bacillus cereus 03BB102.</title>
        <authorList>
            <person name="Dodson R.J."/>
            <person name="Jackson P."/>
            <person name="Munk A.C."/>
            <person name="Brettin T."/>
            <person name="Bruce D."/>
            <person name="Detter C."/>
            <person name="Tapia R."/>
            <person name="Han C."/>
            <person name="Sutton G."/>
            <person name="Sims D."/>
        </authorList>
    </citation>
    <scope>NUCLEOTIDE SEQUENCE [LARGE SCALE GENOMIC DNA]</scope>
    <source>
        <strain>03BB102</strain>
    </source>
</reference>
<dbReference type="EC" id="1.2.1.41" evidence="1"/>
<dbReference type="EMBL" id="CP001407">
    <property type="protein sequence ID" value="ACO27738.1"/>
    <property type="molecule type" value="Genomic_DNA"/>
</dbReference>
<dbReference type="RefSeq" id="WP_012680226.1">
    <property type="nucleotide sequence ID" value="NC_012472.1"/>
</dbReference>
<dbReference type="SMR" id="C1EZ15"/>
<dbReference type="KEGG" id="bcx:BCA_3063"/>
<dbReference type="PATRIC" id="fig|572264.18.peg.3015"/>
<dbReference type="UniPathway" id="UPA00098">
    <property type="reaction ID" value="UER00360"/>
</dbReference>
<dbReference type="Proteomes" id="UP000002210">
    <property type="component" value="Chromosome"/>
</dbReference>
<dbReference type="GO" id="GO:0005737">
    <property type="term" value="C:cytoplasm"/>
    <property type="evidence" value="ECO:0007669"/>
    <property type="project" value="UniProtKB-SubCell"/>
</dbReference>
<dbReference type="GO" id="GO:0004350">
    <property type="term" value="F:glutamate-5-semialdehyde dehydrogenase activity"/>
    <property type="evidence" value="ECO:0007669"/>
    <property type="project" value="UniProtKB-UniRule"/>
</dbReference>
<dbReference type="GO" id="GO:0050661">
    <property type="term" value="F:NADP binding"/>
    <property type="evidence" value="ECO:0007669"/>
    <property type="project" value="InterPro"/>
</dbReference>
<dbReference type="GO" id="GO:0055129">
    <property type="term" value="P:L-proline biosynthetic process"/>
    <property type="evidence" value="ECO:0007669"/>
    <property type="project" value="UniProtKB-UniRule"/>
</dbReference>
<dbReference type="CDD" id="cd07079">
    <property type="entry name" value="ALDH_F18-19_ProA-GPR"/>
    <property type="match status" value="1"/>
</dbReference>
<dbReference type="FunFam" id="3.40.309.10:FF:000006">
    <property type="entry name" value="Gamma-glutamyl phosphate reductase"/>
    <property type="match status" value="1"/>
</dbReference>
<dbReference type="Gene3D" id="3.40.605.10">
    <property type="entry name" value="Aldehyde Dehydrogenase, Chain A, domain 1"/>
    <property type="match status" value="1"/>
</dbReference>
<dbReference type="Gene3D" id="3.40.309.10">
    <property type="entry name" value="Aldehyde Dehydrogenase, Chain A, domain 2"/>
    <property type="match status" value="1"/>
</dbReference>
<dbReference type="HAMAP" id="MF_00412">
    <property type="entry name" value="ProA"/>
    <property type="match status" value="1"/>
</dbReference>
<dbReference type="InterPro" id="IPR016161">
    <property type="entry name" value="Ald_DH/histidinol_DH"/>
</dbReference>
<dbReference type="InterPro" id="IPR016163">
    <property type="entry name" value="Ald_DH_C"/>
</dbReference>
<dbReference type="InterPro" id="IPR016162">
    <property type="entry name" value="Ald_DH_N"/>
</dbReference>
<dbReference type="InterPro" id="IPR015590">
    <property type="entry name" value="Aldehyde_DH_dom"/>
</dbReference>
<dbReference type="InterPro" id="IPR020593">
    <property type="entry name" value="G-glutamylP_reductase_CS"/>
</dbReference>
<dbReference type="InterPro" id="IPR012134">
    <property type="entry name" value="Glu-5-SA_DH"/>
</dbReference>
<dbReference type="InterPro" id="IPR000965">
    <property type="entry name" value="GPR_dom"/>
</dbReference>
<dbReference type="NCBIfam" id="NF001221">
    <property type="entry name" value="PRK00197.1"/>
    <property type="match status" value="1"/>
</dbReference>
<dbReference type="NCBIfam" id="TIGR00407">
    <property type="entry name" value="proA"/>
    <property type="match status" value="1"/>
</dbReference>
<dbReference type="PANTHER" id="PTHR11063:SF8">
    <property type="entry name" value="DELTA-1-PYRROLINE-5-CARBOXYLATE SYNTHASE"/>
    <property type="match status" value="1"/>
</dbReference>
<dbReference type="PANTHER" id="PTHR11063">
    <property type="entry name" value="GLUTAMATE SEMIALDEHYDE DEHYDROGENASE"/>
    <property type="match status" value="1"/>
</dbReference>
<dbReference type="Pfam" id="PF00171">
    <property type="entry name" value="Aldedh"/>
    <property type="match status" value="1"/>
</dbReference>
<dbReference type="PIRSF" id="PIRSF000151">
    <property type="entry name" value="GPR"/>
    <property type="match status" value="1"/>
</dbReference>
<dbReference type="SUPFAM" id="SSF53720">
    <property type="entry name" value="ALDH-like"/>
    <property type="match status" value="1"/>
</dbReference>
<dbReference type="PROSITE" id="PS01223">
    <property type="entry name" value="PROA"/>
    <property type="match status" value="1"/>
</dbReference>
<feature type="chain" id="PRO_1000193567" description="Gamma-glutamyl phosphate reductase">
    <location>
        <begin position="1"/>
        <end position="415"/>
    </location>
</feature>
<sequence length="415" mass="45627">MNEVLAKGKRAKEVAMNLVLKSTSQKNEALAAIAERLIVETAYILEENKRGIEEGKAKGFSDSLLDRLMLTEQRIVDMTEGIKQLIELRDPVGECVSAWERPNGLSIQEMRVPLGVVGMIYEARPNVTVDAATICLKTGNAVILRGSSSAIHSNKAIVAVIHRALKQTSLPQESVQLIEDTTRDSAKQLFTMNDYLDVLIPRGGKQLIDTVVREASVPVLETGAGNCHVFIDETADKQMAFDIIINAKTQRPSVCNAIETIVLHEKWAEQYGSELFSSLKKRGVELRGDQKALAMDSSIVLASEEDWWTEFLSLTLAVKLVSSIEEAIHHINTYGSMHSEAIISENEENVSKFFVSVDAAALYHNASTRFTDGSEFGFGAEIGISTQKLHVRGPMGLPALTSTKYVIRGNGQIRK</sequence>
<protein>
    <recommendedName>
        <fullName evidence="1">Gamma-glutamyl phosphate reductase</fullName>
        <shortName evidence="1">GPR</shortName>
        <ecNumber evidence="1">1.2.1.41</ecNumber>
    </recommendedName>
    <alternativeName>
        <fullName evidence="1">Glutamate-5-semialdehyde dehydrogenase</fullName>
    </alternativeName>
    <alternativeName>
        <fullName evidence="1">Glutamyl-gamma-semialdehyde dehydrogenase</fullName>
        <shortName evidence="1">GSA dehydrogenase</shortName>
    </alternativeName>
</protein>
<name>PROA_BACC3</name>
<gene>
    <name evidence="1" type="primary">proA</name>
    <name type="ordered locus">BCA_3063</name>
</gene>
<accession>C1EZ15</accession>
<proteinExistence type="inferred from homology"/>
<organism>
    <name type="scientific">Bacillus cereus (strain 03BB102)</name>
    <dbReference type="NCBI Taxonomy" id="572264"/>
    <lineage>
        <taxon>Bacteria</taxon>
        <taxon>Bacillati</taxon>
        <taxon>Bacillota</taxon>
        <taxon>Bacilli</taxon>
        <taxon>Bacillales</taxon>
        <taxon>Bacillaceae</taxon>
        <taxon>Bacillus</taxon>
        <taxon>Bacillus cereus group</taxon>
    </lineage>
</organism>
<comment type="function">
    <text evidence="1">Catalyzes the NADPH-dependent reduction of L-glutamate 5-phosphate into L-glutamate 5-semialdehyde and phosphate. The product spontaneously undergoes cyclization to form 1-pyrroline-5-carboxylate.</text>
</comment>
<comment type="catalytic activity">
    <reaction evidence="1">
        <text>L-glutamate 5-semialdehyde + phosphate + NADP(+) = L-glutamyl 5-phosphate + NADPH + H(+)</text>
        <dbReference type="Rhea" id="RHEA:19541"/>
        <dbReference type="ChEBI" id="CHEBI:15378"/>
        <dbReference type="ChEBI" id="CHEBI:43474"/>
        <dbReference type="ChEBI" id="CHEBI:57783"/>
        <dbReference type="ChEBI" id="CHEBI:58066"/>
        <dbReference type="ChEBI" id="CHEBI:58274"/>
        <dbReference type="ChEBI" id="CHEBI:58349"/>
        <dbReference type="EC" id="1.2.1.41"/>
    </reaction>
</comment>
<comment type="pathway">
    <text evidence="1">Amino-acid biosynthesis; L-proline biosynthesis; L-glutamate 5-semialdehyde from L-glutamate: step 2/2.</text>
</comment>
<comment type="subcellular location">
    <subcellularLocation>
        <location evidence="1">Cytoplasm</location>
    </subcellularLocation>
</comment>
<comment type="similarity">
    <text evidence="1">Belongs to the gamma-glutamyl phosphate reductase family.</text>
</comment>
<keyword id="KW-0028">Amino-acid biosynthesis</keyword>
<keyword id="KW-0963">Cytoplasm</keyword>
<keyword id="KW-0521">NADP</keyword>
<keyword id="KW-0560">Oxidoreductase</keyword>
<keyword id="KW-0641">Proline biosynthesis</keyword>